<reference key="1">
    <citation type="journal article" date="2001" name="Lancet">
        <title>Whole genome sequencing of meticillin-resistant Staphylococcus aureus.</title>
        <authorList>
            <person name="Kuroda M."/>
            <person name="Ohta T."/>
            <person name="Uchiyama I."/>
            <person name="Baba T."/>
            <person name="Yuzawa H."/>
            <person name="Kobayashi I."/>
            <person name="Cui L."/>
            <person name="Oguchi A."/>
            <person name="Aoki K."/>
            <person name="Nagai Y."/>
            <person name="Lian J.-Q."/>
            <person name="Ito T."/>
            <person name="Kanamori M."/>
            <person name="Matsumaru H."/>
            <person name="Maruyama A."/>
            <person name="Murakami H."/>
            <person name="Hosoyama A."/>
            <person name="Mizutani-Ui Y."/>
            <person name="Takahashi N.K."/>
            <person name="Sawano T."/>
            <person name="Inoue R."/>
            <person name="Kaito C."/>
            <person name="Sekimizu K."/>
            <person name="Hirakawa H."/>
            <person name="Kuhara S."/>
            <person name="Goto S."/>
            <person name="Yabuzaki J."/>
            <person name="Kanehisa M."/>
            <person name="Yamashita A."/>
            <person name="Oshima K."/>
            <person name="Furuya K."/>
            <person name="Yoshino C."/>
            <person name="Shiba T."/>
            <person name="Hattori M."/>
            <person name="Ogasawara N."/>
            <person name="Hayashi H."/>
            <person name="Hiramatsu K."/>
        </authorList>
    </citation>
    <scope>NUCLEOTIDE SEQUENCE [LARGE SCALE GENOMIC DNA]</scope>
    <source>
        <strain>Mu50 / ATCC 700699</strain>
    </source>
</reference>
<keyword id="KW-1003">Cell membrane</keyword>
<keyword id="KW-0472">Membrane</keyword>
<keyword id="KW-0735">Signal-anchor</keyword>
<keyword id="KW-0804">Transcription</keyword>
<keyword id="KW-0805">Transcription regulation</keyword>
<keyword id="KW-0812">Transmembrane</keyword>
<keyword id="KW-1133">Transmembrane helix</keyword>
<accession>Q931S1</accession>
<gene>
    <name type="primary">msrR</name>
    <name type="ordered locus">SAV1362</name>
</gene>
<sequence>MDKETNDNEYRRQSEHRTSAPKRKKKKKIRKLPIILLIVVILLIALVVYIVHSYNSGVEYAKKHAKDVKVHQFNGPVKNDGKISILVLGADKAQGGQSRTDSIMVVQYDFINKKMKMMSVMRDIYADIPGYGKHKINSAYALGGPKLLRKTLDKNLGINPEYYAVVDFTGFEKMIDELMPEGVPINVEKDMSKNIGVSLKKGNHRLNGKELLGYARFRHDPEGDFGRVRRQQQVMQTLKKEMVNFRTVVKLPKVAGILRGYVNTNIPDSGIFQTGLSFGIRGEKDVKSLTVPIKNSYEDVNTNTDGSALQINKNTNKQAIKDFLDED</sequence>
<dbReference type="EMBL" id="BA000017">
    <property type="protein sequence ID" value="BAB57524.1"/>
    <property type="molecule type" value="Genomic_DNA"/>
</dbReference>
<dbReference type="RefSeq" id="WP_000356978.1">
    <property type="nucleotide sequence ID" value="NC_002758.2"/>
</dbReference>
<dbReference type="SMR" id="Q931S1"/>
<dbReference type="DNASU" id="1121337"/>
<dbReference type="KEGG" id="sav:SAV1362"/>
<dbReference type="HOGENOM" id="CLU_016455_1_0_9"/>
<dbReference type="PhylomeDB" id="Q931S1"/>
<dbReference type="Proteomes" id="UP000002481">
    <property type="component" value="Chromosome"/>
</dbReference>
<dbReference type="GO" id="GO:0005886">
    <property type="term" value="C:plasma membrane"/>
    <property type="evidence" value="ECO:0007669"/>
    <property type="project" value="UniProtKB-SubCell"/>
</dbReference>
<dbReference type="Gene3D" id="3.40.630.190">
    <property type="entry name" value="LCP protein"/>
    <property type="match status" value="1"/>
</dbReference>
<dbReference type="InterPro" id="IPR050922">
    <property type="entry name" value="LytR/CpsA/Psr_CW_biosynth"/>
</dbReference>
<dbReference type="InterPro" id="IPR004474">
    <property type="entry name" value="LytR_CpsA_psr"/>
</dbReference>
<dbReference type="NCBIfam" id="TIGR00350">
    <property type="entry name" value="lytR_cpsA_psr"/>
    <property type="match status" value="1"/>
</dbReference>
<dbReference type="PANTHER" id="PTHR33392">
    <property type="entry name" value="POLYISOPRENYL-TEICHOIC ACID--PEPTIDOGLYCAN TEICHOIC ACID TRANSFERASE TAGU"/>
    <property type="match status" value="1"/>
</dbReference>
<dbReference type="PANTHER" id="PTHR33392:SF8">
    <property type="entry name" value="REGULATORY PROTEIN MSRR"/>
    <property type="match status" value="1"/>
</dbReference>
<dbReference type="Pfam" id="PF03816">
    <property type="entry name" value="LytR_cpsA_psr"/>
    <property type="match status" value="1"/>
</dbReference>
<protein>
    <recommendedName>
        <fullName>Regulatory protein MsrR</fullName>
    </recommendedName>
</protein>
<organism>
    <name type="scientific">Staphylococcus aureus (strain Mu50 / ATCC 700699)</name>
    <dbReference type="NCBI Taxonomy" id="158878"/>
    <lineage>
        <taxon>Bacteria</taxon>
        <taxon>Bacillati</taxon>
        <taxon>Bacillota</taxon>
        <taxon>Bacilli</taxon>
        <taxon>Bacillales</taxon>
        <taxon>Staphylococcaceae</taxon>
        <taxon>Staphylococcus</taxon>
    </lineage>
</organism>
<comment type="function">
    <text evidence="1">Involved in SarA attenuation. Affects resistance to oxacillin and teicoplanin, as well as the synthesis of virulence factors (By similarity).</text>
</comment>
<comment type="subcellular location">
    <subcellularLocation>
        <location evidence="4">Cell membrane</location>
        <topology evidence="4">Single-pass type II membrane protein</topology>
    </subcellularLocation>
</comment>
<comment type="similarity">
    <text evidence="4">Belongs to the LytR/CpsA/Psr (LCP) family.</text>
</comment>
<evidence type="ECO:0000250" key="1"/>
<evidence type="ECO:0000255" key="2"/>
<evidence type="ECO:0000256" key="3">
    <source>
        <dbReference type="SAM" id="MobiDB-lite"/>
    </source>
</evidence>
<evidence type="ECO:0000305" key="4"/>
<name>MSRR_STAAM</name>
<feature type="chain" id="PRO_0000218503" description="Regulatory protein MsrR">
    <location>
        <begin position="1"/>
        <end position="327"/>
    </location>
</feature>
<feature type="topological domain" description="Cytoplasmic" evidence="2">
    <location>
        <begin position="1"/>
        <end position="31"/>
    </location>
</feature>
<feature type="transmembrane region" description="Helical; Signal-anchor for type II membrane protein" evidence="2">
    <location>
        <begin position="32"/>
        <end position="52"/>
    </location>
</feature>
<feature type="topological domain" description="Extracellular" evidence="2">
    <location>
        <begin position="53"/>
        <end position="327"/>
    </location>
</feature>
<feature type="region of interest" description="Disordered" evidence="3">
    <location>
        <begin position="1"/>
        <end position="24"/>
    </location>
</feature>
<feature type="compositionally biased region" description="Basic and acidic residues" evidence="3">
    <location>
        <begin position="1"/>
        <end position="18"/>
    </location>
</feature>
<proteinExistence type="inferred from homology"/>